<geneLocation type="chloroplast"/>
<reference key="1">
    <citation type="journal article" date="2004" name="J. Mol. Evol.">
        <title>Comparative analysis of the complete plastid genome sequence of the red alga Gracilaria tenuistipitata var. liui provides insights into the evolution of rhodoplasts and their relationship to other plastids.</title>
        <authorList>
            <person name="Hagopian J.C."/>
            <person name="Reis M."/>
            <person name="Kitajima J.P."/>
            <person name="Bhattacharya D."/>
            <person name="de Oliveira M.C."/>
        </authorList>
    </citation>
    <scope>NUCLEOTIDE SEQUENCE [LARGE SCALE GENOMIC DNA]</scope>
</reference>
<organism>
    <name type="scientific">Gracilaria tenuistipitata var. liui</name>
    <name type="common">Red alga</name>
    <dbReference type="NCBI Taxonomy" id="285951"/>
    <lineage>
        <taxon>Eukaryota</taxon>
        <taxon>Rhodophyta</taxon>
        <taxon>Florideophyceae</taxon>
        <taxon>Rhodymeniophycidae</taxon>
        <taxon>Gracilariales</taxon>
        <taxon>Gracilariaceae</taxon>
        <taxon>Gracilaria</taxon>
        <taxon>Gracilaria tenuistipitata</taxon>
    </lineage>
</organism>
<keyword id="KW-0150">Chloroplast</keyword>
<keyword id="KW-0934">Plastid</keyword>
<keyword id="KW-0687">Ribonucleoprotein</keyword>
<keyword id="KW-0689">Ribosomal protein</keyword>
<keyword id="KW-0694">RNA-binding</keyword>
<keyword id="KW-0699">rRNA-binding</keyword>
<proteinExistence type="inferred from homology"/>
<sequence>MTNKTTNIQATGKYVRLSTAKTRRVLNQIKGKKYQEAILILEFMTYKPCKIIKKILESAGNNALNLKYEKQNLIIKQAFANDGPKLKRFQPRAQGRAFRIQKPTCHITINLSIN</sequence>
<gene>
    <name type="primary">rpl22</name>
    <name type="ordered locus">Grc000096</name>
</gene>
<accession>Q6B8V8</accession>
<protein>
    <recommendedName>
        <fullName evidence="2">Large ribosomal subunit protein uL22c</fullName>
    </recommendedName>
    <alternativeName>
        <fullName>50S ribosomal protein L22, chloroplastic</fullName>
    </alternativeName>
</protein>
<comment type="function">
    <text evidence="1">This protein binds specifically to 23S rRNA.</text>
</comment>
<comment type="function">
    <text evidence="1">The globular domain of the protein is located near the polypeptide exit tunnel on the outside of the subunit, while an extended beta-hairpin is found that lines the wall of the exit tunnel in the center of the 70S ribosome.</text>
</comment>
<comment type="subunit">
    <text evidence="1">Part of the 50S ribosomal subunit.</text>
</comment>
<comment type="subcellular location">
    <subcellularLocation>
        <location>Plastid</location>
        <location>Chloroplast</location>
    </subcellularLocation>
</comment>
<comment type="similarity">
    <text evidence="2">Belongs to the universal ribosomal protein uL22 family.</text>
</comment>
<dbReference type="EMBL" id="AY673996">
    <property type="protein sequence ID" value="AAT79677.1"/>
    <property type="molecule type" value="Genomic_DNA"/>
</dbReference>
<dbReference type="RefSeq" id="YP_063602.1">
    <property type="nucleotide sequence ID" value="NC_006137.1"/>
</dbReference>
<dbReference type="SMR" id="Q6B8V8"/>
<dbReference type="GeneID" id="2943960"/>
<dbReference type="GO" id="GO:0009507">
    <property type="term" value="C:chloroplast"/>
    <property type="evidence" value="ECO:0007669"/>
    <property type="project" value="UniProtKB-SubCell"/>
</dbReference>
<dbReference type="GO" id="GO:0015934">
    <property type="term" value="C:large ribosomal subunit"/>
    <property type="evidence" value="ECO:0007669"/>
    <property type="project" value="InterPro"/>
</dbReference>
<dbReference type="GO" id="GO:0019843">
    <property type="term" value="F:rRNA binding"/>
    <property type="evidence" value="ECO:0007669"/>
    <property type="project" value="UniProtKB-UniRule"/>
</dbReference>
<dbReference type="GO" id="GO:0003735">
    <property type="term" value="F:structural constituent of ribosome"/>
    <property type="evidence" value="ECO:0007669"/>
    <property type="project" value="InterPro"/>
</dbReference>
<dbReference type="GO" id="GO:0006412">
    <property type="term" value="P:translation"/>
    <property type="evidence" value="ECO:0007669"/>
    <property type="project" value="UniProtKB-UniRule"/>
</dbReference>
<dbReference type="CDD" id="cd00336">
    <property type="entry name" value="Ribosomal_L22"/>
    <property type="match status" value="1"/>
</dbReference>
<dbReference type="Gene3D" id="3.90.470.10">
    <property type="entry name" value="Ribosomal protein L22/L17"/>
    <property type="match status" value="1"/>
</dbReference>
<dbReference type="HAMAP" id="MF_01331_B">
    <property type="entry name" value="Ribosomal_uL22_B"/>
    <property type="match status" value="1"/>
</dbReference>
<dbReference type="InterPro" id="IPR001063">
    <property type="entry name" value="Ribosomal_uL22"/>
</dbReference>
<dbReference type="InterPro" id="IPR005727">
    <property type="entry name" value="Ribosomal_uL22_bac/chlpt-type"/>
</dbReference>
<dbReference type="InterPro" id="IPR047867">
    <property type="entry name" value="Ribosomal_uL22_bac/org-type"/>
</dbReference>
<dbReference type="InterPro" id="IPR018260">
    <property type="entry name" value="Ribosomal_uL22_CS"/>
</dbReference>
<dbReference type="InterPro" id="IPR036394">
    <property type="entry name" value="Ribosomal_uL22_sf"/>
</dbReference>
<dbReference type="NCBIfam" id="TIGR01044">
    <property type="entry name" value="rplV_bact"/>
    <property type="match status" value="1"/>
</dbReference>
<dbReference type="PANTHER" id="PTHR13501">
    <property type="entry name" value="CHLOROPLAST 50S RIBOSOMAL PROTEIN L22-RELATED"/>
    <property type="match status" value="1"/>
</dbReference>
<dbReference type="PANTHER" id="PTHR13501:SF8">
    <property type="entry name" value="LARGE RIBOSOMAL SUBUNIT PROTEIN UL22M"/>
    <property type="match status" value="1"/>
</dbReference>
<dbReference type="Pfam" id="PF00237">
    <property type="entry name" value="Ribosomal_L22"/>
    <property type="match status" value="1"/>
</dbReference>
<dbReference type="SUPFAM" id="SSF54843">
    <property type="entry name" value="Ribosomal protein L22"/>
    <property type="match status" value="1"/>
</dbReference>
<dbReference type="PROSITE" id="PS00464">
    <property type="entry name" value="RIBOSOMAL_L22"/>
    <property type="match status" value="1"/>
</dbReference>
<feature type="chain" id="PRO_0000125305" description="Large ribosomal subunit protein uL22c">
    <location>
        <begin position="1"/>
        <end position="114"/>
    </location>
</feature>
<evidence type="ECO:0000250" key="1"/>
<evidence type="ECO:0000305" key="2"/>
<name>RK22_GRATL</name>